<feature type="initiator methionine" description="Removed" evidence="3">
    <location>
        <position position="1"/>
    </location>
</feature>
<feature type="chain" id="PRO_0000245030" description="Mannose-6-phosphate isomerase">
    <location>
        <begin position="2"/>
        <end position="423"/>
    </location>
</feature>
<feature type="active site" evidence="1">
    <location>
        <position position="295"/>
    </location>
</feature>
<feature type="binding site" evidence="1">
    <location>
        <position position="110"/>
    </location>
    <ligand>
        <name>Zn(2+)</name>
        <dbReference type="ChEBI" id="CHEBI:29105"/>
    </ligand>
</feature>
<feature type="binding site" evidence="1">
    <location>
        <position position="112"/>
    </location>
    <ligand>
        <name>Zn(2+)</name>
        <dbReference type="ChEBI" id="CHEBI:29105"/>
    </ligand>
</feature>
<feature type="binding site" evidence="1">
    <location>
        <position position="137"/>
    </location>
    <ligand>
        <name>Zn(2+)</name>
        <dbReference type="ChEBI" id="CHEBI:29105"/>
    </ligand>
</feature>
<feature type="binding site" evidence="1">
    <location>
        <position position="276"/>
    </location>
    <ligand>
        <name>Zn(2+)</name>
        <dbReference type="ChEBI" id="CHEBI:29105"/>
    </ligand>
</feature>
<feature type="modified residue" description="N-acetylalanine" evidence="3">
    <location>
        <position position="2"/>
    </location>
</feature>
<feature type="modified residue" description="Phosphoserine" evidence="3">
    <location>
        <position position="102"/>
    </location>
</feature>
<feature type="modified residue" description="Phosphoserine" evidence="3">
    <location>
        <position position="108"/>
    </location>
</feature>
<evidence type="ECO:0000250" key="1"/>
<evidence type="ECO:0000250" key="2">
    <source>
        <dbReference type="UniProtKB" id="P34948"/>
    </source>
</evidence>
<evidence type="ECO:0000250" key="3">
    <source>
        <dbReference type="UniProtKB" id="P34949"/>
    </source>
</evidence>
<evidence type="ECO:0000250" key="4">
    <source>
        <dbReference type="UniProtKB" id="Q924M7"/>
    </source>
</evidence>
<evidence type="ECO:0000305" key="5"/>
<dbReference type="EC" id="5.3.1.8" evidence="3"/>
<dbReference type="EMBL" id="BC102844">
    <property type="protein sequence ID" value="AAI02845.1"/>
    <property type="molecule type" value="mRNA"/>
</dbReference>
<dbReference type="RefSeq" id="NP_001030361.1">
    <property type="nucleotide sequence ID" value="NM_001035284.1"/>
</dbReference>
<dbReference type="SMR" id="Q3SZI0"/>
<dbReference type="FunCoup" id="Q3SZI0">
    <property type="interactions" value="2961"/>
</dbReference>
<dbReference type="STRING" id="9913.ENSBTAP00000007684"/>
<dbReference type="PaxDb" id="9913-ENSBTAP00000007684"/>
<dbReference type="Ensembl" id="ENSBTAT00000007684.6">
    <property type="protein sequence ID" value="ENSBTAP00000007684.6"/>
    <property type="gene ID" value="ENSBTAG00000005845.7"/>
</dbReference>
<dbReference type="GeneID" id="513586"/>
<dbReference type="KEGG" id="bta:513586"/>
<dbReference type="CTD" id="4351"/>
<dbReference type="VEuPathDB" id="HostDB:ENSBTAG00000005845"/>
<dbReference type="VGNC" id="VGNC:50218">
    <property type="gene designation" value="MPI"/>
</dbReference>
<dbReference type="eggNOG" id="KOG2757">
    <property type="taxonomic scope" value="Eukaryota"/>
</dbReference>
<dbReference type="GeneTree" id="ENSGT00390000016075"/>
<dbReference type="InParanoid" id="Q3SZI0"/>
<dbReference type="OMA" id="DIGLFCG"/>
<dbReference type="OrthoDB" id="6605218at2759"/>
<dbReference type="Reactome" id="R-BTA-446205">
    <property type="pathway name" value="Synthesis of GDP-mannose"/>
</dbReference>
<dbReference type="UniPathway" id="UPA00126">
    <property type="reaction ID" value="UER00423"/>
</dbReference>
<dbReference type="Proteomes" id="UP000009136">
    <property type="component" value="Chromosome 21"/>
</dbReference>
<dbReference type="Bgee" id="ENSBTAG00000005845">
    <property type="expression patterns" value="Expressed in biceps femoris and 107 other cell types or tissues"/>
</dbReference>
<dbReference type="GO" id="GO:0005829">
    <property type="term" value="C:cytosol"/>
    <property type="evidence" value="ECO:0000318"/>
    <property type="project" value="GO_Central"/>
</dbReference>
<dbReference type="GO" id="GO:0004476">
    <property type="term" value="F:mannose-6-phosphate isomerase activity"/>
    <property type="evidence" value="ECO:0000250"/>
    <property type="project" value="UniProtKB"/>
</dbReference>
<dbReference type="GO" id="GO:0008270">
    <property type="term" value="F:zinc ion binding"/>
    <property type="evidence" value="ECO:0007669"/>
    <property type="project" value="InterPro"/>
</dbReference>
<dbReference type="GO" id="GO:0061729">
    <property type="term" value="P:GDP-D-mannose biosynthetic process from fructose-6-phosphate"/>
    <property type="evidence" value="ECO:0007669"/>
    <property type="project" value="Ensembl"/>
</dbReference>
<dbReference type="GO" id="GO:0009298">
    <property type="term" value="P:GDP-mannose biosynthetic process"/>
    <property type="evidence" value="ECO:0000318"/>
    <property type="project" value="GO_Central"/>
</dbReference>
<dbReference type="GO" id="GO:0061611">
    <property type="term" value="P:mannose to fructose-6-phosphate catabolic process"/>
    <property type="evidence" value="ECO:0000250"/>
    <property type="project" value="UniProtKB"/>
</dbReference>
<dbReference type="CDD" id="cd07011">
    <property type="entry name" value="cupin_PMI_type_I_N"/>
    <property type="match status" value="1"/>
</dbReference>
<dbReference type="FunFam" id="1.10.441.10:FF:000001">
    <property type="entry name" value="Mannose-6-phosphate isomerase"/>
    <property type="match status" value="1"/>
</dbReference>
<dbReference type="FunFam" id="2.60.120.10:FF:000044">
    <property type="entry name" value="Mannose-6-phosphate isomerase"/>
    <property type="match status" value="1"/>
</dbReference>
<dbReference type="FunFam" id="2.60.120.10:FF:000060">
    <property type="entry name" value="Putative mannose-6-phosphate isomerase"/>
    <property type="match status" value="1"/>
</dbReference>
<dbReference type="Gene3D" id="2.60.120.10">
    <property type="entry name" value="Jelly Rolls"/>
    <property type="match status" value="2"/>
</dbReference>
<dbReference type="Gene3D" id="1.10.441.10">
    <property type="entry name" value="Phosphomannose Isomerase, domain 2"/>
    <property type="match status" value="1"/>
</dbReference>
<dbReference type="InterPro" id="IPR001250">
    <property type="entry name" value="Man6P_Isoase-1"/>
</dbReference>
<dbReference type="InterPro" id="IPR016305">
    <property type="entry name" value="Mannose-6-P_Isomerase"/>
</dbReference>
<dbReference type="InterPro" id="IPR018050">
    <property type="entry name" value="Pmannose_isomerase-type1_CS"/>
</dbReference>
<dbReference type="InterPro" id="IPR046456">
    <property type="entry name" value="PMI_typeI_C"/>
</dbReference>
<dbReference type="InterPro" id="IPR046457">
    <property type="entry name" value="PMI_typeI_cat"/>
</dbReference>
<dbReference type="InterPro" id="IPR046458">
    <property type="entry name" value="PMI_typeI_hel"/>
</dbReference>
<dbReference type="InterPro" id="IPR014710">
    <property type="entry name" value="RmlC-like_jellyroll"/>
</dbReference>
<dbReference type="InterPro" id="IPR011051">
    <property type="entry name" value="RmlC_Cupin_sf"/>
</dbReference>
<dbReference type="NCBIfam" id="TIGR00218">
    <property type="entry name" value="manA"/>
    <property type="match status" value="1"/>
</dbReference>
<dbReference type="PANTHER" id="PTHR10309">
    <property type="entry name" value="MANNOSE-6-PHOSPHATE ISOMERASE"/>
    <property type="match status" value="1"/>
</dbReference>
<dbReference type="PANTHER" id="PTHR10309:SF0">
    <property type="entry name" value="MANNOSE-6-PHOSPHATE ISOMERASE"/>
    <property type="match status" value="1"/>
</dbReference>
<dbReference type="Pfam" id="PF01238">
    <property type="entry name" value="PMI_typeI_C"/>
    <property type="match status" value="1"/>
</dbReference>
<dbReference type="Pfam" id="PF20511">
    <property type="entry name" value="PMI_typeI_cat"/>
    <property type="match status" value="1"/>
</dbReference>
<dbReference type="Pfam" id="PF20512">
    <property type="entry name" value="PMI_typeI_hel"/>
    <property type="match status" value="1"/>
</dbReference>
<dbReference type="PIRSF" id="PIRSF001480">
    <property type="entry name" value="Mannose-6-phosphate_isomerase"/>
    <property type="match status" value="1"/>
</dbReference>
<dbReference type="PRINTS" id="PR00714">
    <property type="entry name" value="MAN6PISMRASE"/>
</dbReference>
<dbReference type="SUPFAM" id="SSF51182">
    <property type="entry name" value="RmlC-like cupins"/>
    <property type="match status" value="1"/>
</dbReference>
<dbReference type="PROSITE" id="PS00965">
    <property type="entry name" value="PMI_I_1"/>
    <property type="match status" value="1"/>
</dbReference>
<dbReference type="PROSITE" id="PS00966">
    <property type="entry name" value="PMI_I_2"/>
    <property type="match status" value="1"/>
</dbReference>
<keyword id="KW-0007">Acetylation</keyword>
<keyword id="KW-0963">Cytoplasm</keyword>
<keyword id="KW-0413">Isomerase</keyword>
<keyword id="KW-0479">Metal-binding</keyword>
<keyword id="KW-0597">Phosphoprotein</keyword>
<keyword id="KW-1185">Reference proteome</keyword>
<keyword id="KW-0862">Zinc</keyword>
<proteinExistence type="evidence at transcript level"/>
<name>MPI_BOVIN</name>
<protein>
    <recommendedName>
        <fullName>Mannose-6-phosphate isomerase</fullName>
        <ecNumber evidence="3">5.3.1.8</ecNumber>
    </recommendedName>
    <alternativeName>
        <fullName>Phosphohexomutase</fullName>
    </alternativeName>
    <alternativeName>
        <fullName evidence="3">Phosphomannose isomerase</fullName>
        <shortName evidence="3">PMI</shortName>
    </alternativeName>
</protein>
<accession>Q3SZI0</accession>
<comment type="function">
    <text evidence="3">Isomerase that catalyzes the interconversion of fructose-6-P and mannose-6-P and has a critical role in the supply of D-mannose derivatives required for many eukaryotic glycosylation reactions.</text>
</comment>
<comment type="catalytic activity">
    <reaction evidence="3">
        <text>D-mannose 6-phosphate = D-fructose 6-phosphate</text>
        <dbReference type="Rhea" id="RHEA:12356"/>
        <dbReference type="ChEBI" id="CHEBI:58735"/>
        <dbReference type="ChEBI" id="CHEBI:61527"/>
        <dbReference type="EC" id="5.3.1.8"/>
    </reaction>
</comment>
<comment type="cofactor">
    <cofactor evidence="2">
        <name>Zn(2+)</name>
        <dbReference type="ChEBI" id="CHEBI:29105"/>
    </cofactor>
    <text evidence="2">Binds 1 zinc ion per subunit.</text>
</comment>
<comment type="pathway">
    <text>Nucleotide-sugar biosynthesis; GDP-alpha-D-mannose biosynthesis; alpha-D-mannose 1-phosphate from D-fructose 6-phosphate: step 1/2.</text>
</comment>
<comment type="subcellular location">
    <subcellularLocation>
        <location evidence="4">Cytoplasm</location>
    </subcellularLocation>
</comment>
<comment type="similarity">
    <text evidence="5">Belongs to the mannose-6-phosphate isomerase type 1 family.</text>
</comment>
<sequence>MAAQRVFPLSCVVQQYAWGKMGSNSEVARLLASSDPLAQISEDRPYAELWMGTHPRGDAKILDNRISQKTLGQWIADNQDSLGSKVKDTFNGKLPFLFKVLSVETALSIQAHPNKELAEKLHLQAPQHYPDANHKPEMAIALTPFQGLCGFRPVEEIVTFLTKVPEFQFLIGDNAAAQLKQSLSQDSEAVTSALRSCFSHLMKSEKKVVVEQLNLLVKRISQQVAAGNNMEDICGELLLQLHQQYPGDIGCFAIYFLNLLTLKPGEAMFLEANVPHAYLKGDCVECMACSDNTVRAGLTPKFIDVPTLCEMLSYTPSPSQDRLFPPARSPEDPYLSIYDPPVPDFTVMKVEVPGSVTEYKVLALDSASILLVVQGTVTASSPTAQAAIPLKRGGVLFIGANESVSLKLTVPKDLLMFRACCLL</sequence>
<gene>
    <name type="primary">MPI</name>
</gene>
<organism>
    <name type="scientific">Bos taurus</name>
    <name type="common">Bovine</name>
    <dbReference type="NCBI Taxonomy" id="9913"/>
    <lineage>
        <taxon>Eukaryota</taxon>
        <taxon>Metazoa</taxon>
        <taxon>Chordata</taxon>
        <taxon>Craniata</taxon>
        <taxon>Vertebrata</taxon>
        <taxon>Euteleostomi</taxon>
        <taxon>Mammalia</taxon>
        <taxon>Eutheria</taxon>
        <taxon>Laurasiatheria</taxon>
        <taxon>Artiodactyla</taxon>
        <taxon>Ruminantia</taxon>
        <taxon>Pecora</taxon>
        <taxon>Bovidae</taxon>
        <taxon>Bovinae</taxon>
        <taxon>Bos</taxon>
    </lineage>
</organism>
<reference key="1">
    <citation type="submission" date="2005-08" db="EMBL/GenBank/DDBJ databases">
        <authorList>
            <consortium name="NIH - Mammalian Gene Collection (MGC) project"/>
        </authorList>
    </citation>
    <scope>NUCLEOTIDE SEQUENCE [LARGE SCALE MRNA]</scope>
    <source>
        <strain>Crossbred X Angus</strain>
        <tissue>Ileum</tissue>
    </source>
</reference>